<reference key="1">
    <citation type="submission" date="2008-04" db="EMBL/GenBank/DDBJ databases">
        <title>Complete sequence of chromosome of Methylobacterium populi BJ001.</title>
        <authorList>
            <consortium name="US DOE Joint Genome Institute"/>
            <person name="Copeland A."/>
            <person name="Lucas S."/>
            <person name="Lapidus A."/>
            <person name="Glavina del Rio T."/>
            <person name="Dalin E."/>
            <person name="Tice H."/>
            <person name="Bruce D."/>
            <person name="Goodwin L."/>
            <person name="Pitluck S."/>
            <person name="Chertkov O."/>
            <person name="Brettin T."/>
            <person name="Detter J.C."/>
            <person name="Han C."/>
            <person name="Kuske C.R."/>
            <person name="Schmutz J."/>
            <person name="Larimer F."/>
            <person name="Land M."/>
            <person name="Hauser L."/>
            <person name="Kyrpides N."/>
            <person name="Mikhailova N."/>
            <person name="Marx C."/>
            <person name="Richardson P."/>
        </authorList>
    </citation>
    <scope>NUCLEOTIDE SEQUENCE [LARGE SCALE GENOMIC DNA]</scope>
    <source>
        <strain>ATCC BAA-705 / NCIMB 13946 / BJ001</strain>
    </source>
</reference>
<feature type="chain" id="PRO_1000114691" description="Potassium-transporting ATPase potassium-binding subunit">
    <location>
        <begin position="1"/>
        <end position="571"/>
    </location>
</feature>
<feature type="transmembrane region" description="Helical" evidence="1">
    <location>
        <begin position="3"/>
        <end position="23"/>
    </location>
</feature>
<feature type="transmembrane region" description="Helical" evidence="1">
    <location>
        <begin position="64"/>
        <end position="84"/>
    </location>
</feature>
<feature type="transmembrane region" description="Helical" evidence="1">
    <location>
        <begin position="135"/>
        <end position="155"/>
    </location>
</feature>
<feature type="transmembrane region" description="Helical" evidence="1">
    <location>
        <begin position="179"/>
        <end position="199"/>
    </location>
</feature>
<feature type="transmembrane region" description="Helical" evidence="1">
    <location>
        <begin position="254"/>
        <end position="274"/>
    </location>
</feature>
<feature type="transmembrane region" description="Helical" evidence="1">
    <location>
        <begin position="284"/>
        <end position="304"/>
    </location>
</feature>
<feature type="transmembrane region" description="Helical" evidence="1">
    <location>
        <begin position="330"/>
        <end position="350"/>
    </location>
</feature>
<feature type="transmembrane region" description="Helical" evidence="1">
    <location>
        <begin position="357"/>
        <end position="376"/>
    </location>
</feature>
<feature type="transmembrane region" description="Helical" evidence="1">
    <location>
        <begin position="421"/>
        <end position="441"/>
    </location>
</feature>
<feature type="transmembrane region" description="Helical" evidence="1">
    <location>
        <begin position="488"/>
        <end position="508"/>
    </location>
</feature>
<feature type="transmembrane region" description="Helical" evidence="1">
    <location>
        <begin position="527"/>
        <end position="547"/>
    </location>
</feature>
<comment type="function">
    <text evidence="1">Part of the high-affinity ATP-driven potassium transport (or Kdp) system, which catalyzes the hydrolysis of ATP coupled with the electrogenic transport of potassium into the cytoplasm. This subunit binds the periplasmic potassium ions and delivers the ions to the membrane domain of KdpB through an intramembrane tunnel.</text>
</comment>
<comment type="subunit">
    <text evidence="1">The system is composed of three essential subunits: KdpA, KdpB and KdpC.</text>
</comment>
<comment type="subcellular location">
    <subcellularLocation>
        <location evidence="1">Cell inner membrane</location>
        <topology evidence="1">Multi-pass membrane protein</topology>
    </subcellularLocation>
</comment>
<comment type="similarity">
    <text evidence="1">Belongs to the KdpA family.</text>
</comment>
<protein>
    <recommendedName>
        <fullName evidence="1">Potassium-transporting ATPase potassium-binding subunit</fullName>
    </recommendedName>
    <alternativeName>
        <fullName evidence="1">ATP phosphohydrolase [potassium-transporting] A chain</fullName>
    </alternativeName>
    <alternativeName>
        <fullName evidence="1">Potassium-binding and translocating subunit A</fullName>
    </alternativeName>
    <alternativeName>
        <fullName evidence="1">Potassium-translocating ATPase A chain</fullName>
    </alternativeName>
</protein>
<evidence type="ECO:0000255" key="1">
    <source>
        <dbReference type="HAMAP-Rule" id="MF_00275"/>
    </source>
</evidence>
<gene>
    <name evidence="1" type="primary">kdpA</name>
    <name type="ordered locus">Mpop_0954</name>
</gene>
<organism>
    <name type="scientific">Methylorubrum populi (strain ATCC BAA-705 / NCIMB 13946 / BJ001)</name>
    <name type="common">Methylobacterium populi</name>
    <dbReference type="NCBI Taxonomy" id="441620"/>
    <lineage>
        <taxon>Bacteria</taxon>
        <taxon>Pseudomonadati</taxon>
        <taxon>Pseudomonadota</taxon>
        <taxon>Alphaproteobacteria</taxon>
        <taxon>Hyphomicrobiales</taxon>
        <taxon>Methylobacteriaceae</taxon>
        <taxon>Methylorubrum</taxon>
    </lineage>
</organism>
<accession>B1Z9Y2</accession>
<proteinExistence type="inferred from homology"/>
<name>KDPA_METPB</name>
<sequence length="571" mass="58675">MTLIGWFQIALFCAVVLALVKPLGAYMTRVFAGERTILSPLLAPIERGLYRAAGIDARHEQTWLGYGLAMLVFHALGFVSLYAILRLQDGLPLNPMGQAAVAPDLALNTAVSFVTNTNWQNYGGESTLSYLSQMLGLTPQNFLSAATGLALAVALTRGFARASSRTVGSFWVDLTRCTLYVLLPLCIGLTLFYVWQGMPQTLGASVDATTLEGARQTIAVGPVASQVAIKMLGTNGGGFFNANAAHPFENPTALANLVQMVTIFALGAAMTNVFGRMVGDERQGWAILAAMGVLFLAGVAVTYASEAAGSPVLNGLGFSAGNMEGKEIRFGIVASALFAVVTTAASCGAVNAMHDSFTALGGLIPMLNMQLGEIIVGGVGAGLYGMLVFVLVALFVAGLMVGRTPEYLGKKIEAKEVKMAMLAILCLPLMMLGLAALATVLPAGLAGPANAGPHGFSEILYAFTSAAANNGSAFGGLTGNTLFYNTTLALGMAVGRFMVIVPALAIAGSLAAKKTLPASAGTLPTHGGLFVGLLVGVILIVGGLTFFPALALGPVVEHLAGAAGQTFAAGG</sequence>
<keyword id="KW-0997">Cell inner membrane</keyword>
<keyword id="KW-1003">Cell membrane</keyword>
<keyword id="KW-0406">Ion transport</keyword>
<keyword id="KW-0472">Membrane</keyword>
<keyword id="KW-0630">Potassium</keyword>
<keyword id="KW-0633">Potassium transport</keyword>
<keyword id="KW-0812">Transmembrane</keyword>
<keyword id="KW-1133">Transmembrane helix</keyword>
<keyword id="KW-0813">Transport</keyword>
<dbReference type="EMBL" id="CP001029">
    <property type="protein sequence ID" value="ACB79131.1"/>
    <property type="molecule type" value="Genomic_DNA"/>
</dbReference>
<dbReference type="RefSeq" id="WP_012452885.1">
    <property type="nucleotide sequence ID" value="NC_010725.1"/>
</dbReference>
<dbReference type="SMR" id="B1Z9Y2"/>
<dbReference type="STRING" id="441620.Mpop_0954"/>
<dbReference type="KEGG" id="mpo:Mpop_0954"/>
<dbReference type="eggNOG" id="COG2060">
    <property type="taxonomic scope" value="Bacteria"/>
</dbReference>
<dbReference type="HOGENOM" id="CLU_018614_3_0_5"/>
<dbReference type="OrthoDB" id="9763796at2"/>
<dbReference type="Proteomes" id="UP000007136">
    <property type="component" value="Chromosome"/>
</dbReference>
<dbReference type="GO" id="GO:0005886">
    <property type="term" value="C:plasma membrane"/>
    <property type="evidence" value="ECO:0007669"/>
    <property type="project" value="UniProtKB-SubCell"/>
</dbReference>
<dbReference type="GO" id="GO:0008556">
    <property type="term" value="F:P-type potassium transmembrane transporter activity"/>
    <property type="evidence" value="ECO:0007669"/>
    <property type="project" value="InterPro"/>
</dbReference>
<dbReference type="GO" id="GO:0030955">
    <property type="term" value="F:potassium ion binding"/>
    <property type="evidence" value="ECO:0007669"/>
    <property type="project" value="UniProtKB-UniRule"/>
</dbReference>
<dbReference type="HAMAP" id="MF_00275">
    <property type="entry name" value="KdpA"/>
    <property type="match status" value="1"/>
</dbReference>
<dbReference type="InterPro" id="IPR004623">
    <property type="entry name" value="KdpA"/>
</dbReference>
<dbReference type="NCBIfam" id="TIGR00680">
    <property type="entry name" value="kdpA"/>
    <property type="match status" value="1"/>
</dbReference>
<dbReference type="PANTHER" id="PTHR30607">
    <property type="entry name" value="POTASSIUM-TRANSPORTING ATPASE A CHAIN"/>
    <property type="match status" value="1"/>
</dbReference>
<dbReference type="PANTHER" id="PTHR30607:SF2">
    <property type="entry name" value="POTASSIUM-TRANSPORTING ATPASE POTASSIUM-BINDING SUBUNIT"/>
    <property type="match status" value="1"/>
</dbReference>
<dbReference type="Pfam" id="PF03814">
    <property type="entry name" value="KdpA"/>
    <property type="match status" value="1"/>
</dbReference>
<dbReference type="PIRSF" id="PIRSF001294">
    <property type="entry name" value="K_ATPaseA"/>
    <property type="match status" value="1"/>
</dbReference>